<protein>
    <recommendedName>
        <fullName evidence="3">Radical SAM cyclopropyl synthase TigE</fullName>
        <ecNumber evidence="2">4.1.-.-</ecNumber>
    </recommendedName>
    <alternativeName>
        <fullName evidence="5">Ribosomally synthesized and post-translationally modified peptide-modifying enzyme TigE</fullName>
        <shortName evidence="5">RiPP-modifying enzyme TigE</shortName>
    </alternativeName>
    <alternativeName>
        <fullName evidence="5">TigB maturase</fullName>
    </alternativeName>
</protein>
<sequence>MLNSRELLLSKYVNTIKKDDNSFRLFHSIHGGLCEVDNEIYKVLNYLKKSRLLTDIYNEFSYIDNSEINDIVNEFFEKGFIIYNGQNEIESYREHEKRRINRIETGEQIKAIQLVVSNKCNYNCKYCFTNSIYSSKEREIYQKHDKNQIMTPENAINYIEKVIEKIIKANNKELSIQFFGGEPLTNWNTIERVLDHYKNEDRLKIDYSIVTNGALITPKISEYLKKYNVPVIMSFDSPNRSHRYTNDGSDSIKNTIKSLEILKENNNYIAFNSVLSRDTFDYFNNDIVDFAQNYNVSEIGILLDLNPSFYKDFNLDDIVNKVIDLYEYGLDNGIIVTGYWHITYQNIIMNKSIDRGYKTCSATGGQLSIEPMGVVFACKGSSGYFGNMNDLEGLLSCENYIKYASRSFINSNNCINCELIGHCSGLCLGAIEKKYGNIMYMDKGACDLYKLLIRRLIEREKNIFRYDIDESK</sequence>
<name>TIGE_PARC5</name>
<reference key="1">
    <citation type="submission" date="2016-11" db="EMBL/GenBank/DDBJ databases">
        <authorList>
            <person name="Jaros S."/>
            <person name="Januszkiewicz K."/>
            <person name="Wedrychowicz H."/>
        </authorList>
    </citation>
    <scope>NUCLEOTIDE SEQUENCE [LARGE SCALE GENOMIC DNA]</scope>
    <source>
        <strain>DSM 15212 / CIP 107654 / DViRD3</strain>
    </source>
</reference>
<reference key="2">
    <citation type="journal article" date="2024" name="ACS Chem. Biol.">
        <title>Structural, Biochemical, and Bioinformatic Basis for Identifying Radical SAM Cyclopropyl Synthases.</title>
        <authorList>
            <person name="Lien Y."/>
            <person name="Lachowicz J.C."/>
            <person name="Mendauletova A."/>
            <person name="Zizola C."/>
            <person name="Ngendahimana T."/>
            <person name="Kostenko A."/>
            <person name="Eaton S.S."/>
            <person name="Latham J.A."/>
            <person name="Grove T.L."/>
        </authorList>
    </citation>
    <scope>X-RAY CRYSTALLOGRAPHY (1.66 ANGSTROMS) IN COMPLEX WITH [4FE-4S] CLUSTERS</scope>
    <scope>FUNCTION</scope>
    <scope>CATALYTIC ACTIVITY</scope>
    <scope>COFACTOR</scope>
    <scope>MUTAGENESIS OF TYR-339</scope>
    <source>
        <strain>DSM 15212 / CIP 107654 / DViRD3</strain>
    </source>
</reference>
<comment type="function">
    <text evidence="2">Radical S-adenosylmethionine (SAM) enzyme that catalyzes the formation of methylcyclopropylglycine (mCPG) residues from isoleucine residues residing in the repeating TIGSVS motif of the precursor peptide TigB. Is thus involved in the maturation of a ribosomally synthesized and post-translationally modified peptide (RiPP).</text>
</comment>
<comment type="catalytic activity">
    <reaction evidence="2">
        <text>L-isoleucyl-[protein] + AH2 + 2 S-adenosyl-L-methionine = methylcyclopropylglycine-[protein] + 2 5'-deoxyadenosine + 2 L-methionine + A + 2 H(+)</text>
        <dbReference type="Rhea" id="RHEA:78759"/>
        <dbReference type="Rhea" id="RHEA-COMP:19140"/>
        <dbReference type="Rhea" id="RHEA-COMP:19141"/>
        <dbReference type="ChEBI" id="CHEBI:13193"/>
        <dbReference type="ChEBI" id="CHEBI:15378"/>
        <dbReference type="ChEBI" id="CHEBI:17319"/>
        <dbReference type="ChEBI" id="CHEBI:17499"/>
        <dbReference type="ChEBI" id="CHEBI:30009"/>
        <dbReference type="ChEBI" id="CHEBI:57844"/>
        <dbReference type="ChEBI" id="CHEBI:59789"/>
        <dbReference type="ChEBI" id="CHEBI:229546"/>
    </reaction>
    <physiologicalReaction direction="left-to-right" evidence="2">
        <dbReference type="Rhea" id="RHEA:78760"/>
    </physiologicalReaction>
</comment>
<comment type="cofactor">
    <cofactor evidence="2">
        <name>[4Fe-4S] cluster</name>
        <dbReference type="ChEBI" id="CHEBI:49883"/>
    </cofactor>
    <text evidence="2 5">Binds 2 auxiliary [4Fe-4S] clusters that are seen in the crystal. One cluster is coordinated by 4 cysteine residues, and the other one by 1 tyrosine and 3 cysteine residues (PubMed:38295270). Most likely binds a third typical [4Fe-4S] cluster in the radical SAM core domain, but density for this cluster is absent in all forms of the TigE crystals (Probable).</text>
</comment>
<comment type="similarity">
    <text evidence="4">Belongs to the radical SAM superfamily.</text>
</comment>
<organism>
    <name type="scientific">Paramaledivibacter caminithermalis (strain DSM 15212 / CIP 107654 / DViRD3)</name>
    <name type="common">Clostridium caminithermale</name>
    <dbReference type="NCBI Taxonomy" id="1121301"/>
    <lineage>
        <taxon>Bacteria</taxon>
        <taxon>Bacillati</taxon>
        <taxon>Bacillota</taxon>
        <taxon>Clostridia</taxon>
        <taxon>Peptostreptococcales</taxon>
        <taxon>Caminicellaceae</taxon>
        <taxon>Paramaledivibacter</taxon>
    </lineage>
</organism>
<dbReference type="EC" id="4.1.-.-" evidence="2"/>
<dbReference type="EMBL" id="FRAG01000077">
    <property type="protein sequence ID" value="SHK51129.1"/>
    <property type="molecule type" value="Genomic_DNA"/>
</dbReference>
<dbReference type="RefSeq" id="WP_073153097.1">
    <property type="nucleotide sequence ID" value="NZ_FRAG01000077.1"/>
</dbReference>
<dbReference type="PDB" id="8VPO">
    <property type="method" value="X-ray"/>
    <property type="resolution" value="1.66 A"/>
    <property type="chains" value="A=1-56"/>
</dbReference>
<dbReference type="PDBsum" id="8VPO"/>
<dbReference type="SMR" id="A0A1M6T2I7"/>
<dbReference type="STRING" id="1121301.SAMN02745912_03532"/>
<dbReference type="OrthoDB" id="1854625at2"/>
<dbReference type="Proteomes" id="UP000184465">
    <property type="component" value="Unassembled WGS sequence"/>
</dbReference>
<dbReference type="GO" id="GO:0051539">
    <property type="term" value="F:4 iron, 4 sulfur cluster binding"/>
    <property type="evidence" value="ECO:0007669"/>
    <property type="project" value="UniProtKB-KW"/>
</dbReference>
<dbReference type="GO" id="GO:0016829">
    <property type="term" value="F:lyase activity"/>
    <property type="evidence" value="ECO:0007669"/>
    <property type="project" value="UniProtKB-KW"/>
</dbReference>
<dbReference type="GO" id="GO:0046872">
    <property type="term" value="F:metal ion binding"/>
    <property type="evidence" value="ECO:0007669"/>
    <property type="project" value="UniProtKB-KW"/>
</dbReference>
<dbReference type="GO" id="GO:0016491">
    <property type="term" value="F:oxidoreductase activity"/>
    <property type="evidence" value="ECO:0007669"/>
    <property type="project" value="InterPro"/>
</dbReference>
<dbReference type="CDD" id="cd01335">
    <property type="entry name" value="Radical_SAM"/>
    <property type="match status" value="1"/>
</dbReference>
<dbReference type="Gene3D" id="3.20.20.70">
    <property type="entry name" value="Aldolase class I"/>
    <property type="match status" value="1"/>
</dbReference>
<dbReference type="InterPro" id="IPR013785">
    <property type="entry name" value="Aldolase_TIM"/>
</dbReference>
<dbReference type="InterPro" id="IPR007197">
    <property type="entry name" value="rSAM"/>
</dbReference>
<dbReference type="InterPro" id="IPR023867">
    <property type="entry name" value="Sulphatase_maturase_rSAM"/>
</dbReference>
<dbReference type="PANTHER" id="PTHR43273">
    <property type="entry name" value="ANAEROBIC SULFATASE-MATURATING ENZYME HOMOLOG ASLB-RELATED"/>
    <property type="match status" value="1"/>
</dbReference>
<dbReference type="PANTHER" id="PTHR43273:SF8">
    <property type="entry name" value="RADICAL SAM DOMAIN PROTEIN"/>
    <property type="match status" value="1"/>
</dbReference>
<dbReference type="Pfam" id="PF13353">
    <property type="entry name" value="Fer4_12"/>
    <property type="match status" value="1"/>
</dbReference>
<dbReference type="Pfam" id="PF04055">
    <property type="entry name" value="Radical_SAM"/>
    <property type="match status" value="1"/>
</dbReference>
<dbReference type="SFLD" id="SFLDG01216">
    <property type="entry name" value="thioether_bond_formation_requi"/>
    <property type="match status" value="1"/>
</dbReference>
<dbReference type="SFLD" id="SFLDG01384">
    <property type="entry name" value="thioether_bond_formation_requi"/>
    <property type="match status" value="1"/>
</dbReference>
<dbReference type="SUPFAM" id="SSF102114">
    <property type="entry name" value="Radical SAM enzymes"/>
    <property type="match status" value="1"/>
</dbReference>
<dbReference type="PROSITE" id="PS51918">
    <property type="entry name" value="RADICAL_SAM"/>
    <property type="match status" value="1"/>
</dbReference>
<feature type="chain" id="PRO_0000460353" description="Radical SAM cyclopropyl synthase TigE">
    <location>
        <begin position="1"/>
        <end position="472"/>
    </location>
</feature>
<feature type="domain" description="Radical SAM core" evidence="1">
    <location>
        <begin position="106"/>
        <end position="331"/>
    </location>
</feature>
<feature type="binding site" evidence="1">
    <location>
        <position position="120"/>
    </location>
    <ligand>
        <name>[4Fe-4S] cluster</name>
        <dbReference type="ChEBI" id="CHEBI:49883"/>
        <label>1</label>
        <note>4Fe-4S-S-AdoMet</note>
    </ligand>
</feature>
<feature type="binding site" evidence="1">
    <location>
        <position position="124"/>
    </location>
    <ligand>
        <name>[4Fe-4S] cluster</name>
        <dbReference type="ChEBI" id="CHEBI:49883"/>
        <label>1</label>
        <note>4Fe-4S-S-AdoMet</note>
    </ligand>
</feature>
<feature type="binding site" evidence="1">
    <location>
        <position position="127"/>
    </location>
    <ligand>
        <name>[4Fe-4S] cluster</name>
        <dbReference type="ChEBI" id="CHEBI:49883"/>
        <label>1</label>
        <note>4Fe-4S-S-AdoMet</note>
    </ligand>
</feature>
<feature type="binding site" evidence="2 7">
    <location>
        <position position="339"/>
    </location>
    <ligand>
        <name>[4Fe-4S] cluster</name>
        <dbReference type="ChEBI" id="CHEBI:49883"/>
        <label>3</label>
    </ligand>
</feature>
<feature type="binding site" evidence="2 7">
    <location>
        <position position="360"/>
    </location>
    <ligand>
        <name>[4Fe-4S] cluster</name>
        <dbReference type="ChEBI" id="CHEBI:49883"/>
        <label>3</label>
    </ligand>
</feature>
<feature type="binding site" evidence="2 7">
    <location>
        <position position="378"/>
    </location>
    <ligand>
        <name>[4Fe-4S] cluster</name>
        <dbReference type="ChEBI" id="CHEBI:49883"/>
        <label>3</label>
    </ligand>
</feature>
<feature type="binding site" evidence="2 7">
    <location>
        <position position="414"/>
    </location>
    <ligand>
        <name>[4Fe-4S] cluster</name>
        <dbReference type="ChEBI" id="CHEBI:49883"/>
        <label>2</label>
    </ligand>
</feature>
<feature type="binding site" evidence="2 7">
    <location>
        <position position="417"/>
    </location>
    <ligand>
        <name>[4Fe-4S] cluster</name>
        <dbReference type="ChEBI" id="CHEBI:49883"/>
        <label>2</label>
    </ligand>
</feature>
<feature type="binding site" evidence="2 7">
    <location>
        <position position="423"/>
    </location>
    <ligand>
        <name>[4Fe-4S] cluster</name>
        <dbReference type="ChEBI" id="CHEBI:49883"/>
        <label>2</label>
    </ligand>
</feature>
<feature type="binding site" evidence="2 7">
    <location>
        <position position="427"/>
    </location>
    <ligand>
        <name>[4Fe-4S] cluster</name>
        <dbReference type="ChEBI" id="CHEBI:49883"/>
        <label>3</label>
    </ligand>
</feature>
<feature type="binding site" evidence="2 7">
    <location>
        <position position="446"/>
    </location>
    <ligand>
        <name>[4Fe-4S] cluster</name>
        <dbReference type="ChEBI" id="CHEBI:49883"/>
        <label>2</label>
    </ligand>
</feature>
<feature type="site" description="May act as a redox switch" evidence="5">
    <location>
        <position position="339"/>
    </location>
</feature>
<feature type="mutagenesis site" description="Loss of catalytic activity but no change in iron and sulfide content." evidence="2">
    <original>Y</original>
    <variation>A</variation>
    <variation>F</variation>
    <variation>C</variation>
    <location>
        <position position="339"/>
    </location>
</feature>
<feature type="strand" evidence="8">
    <location>
        <begin position="7"/>
        <end position="9"/>
    </location>
</feature>
<feature type="strand" evidence="8">
    <location>
        <begin position="13"/>
        <end position="19"/>
    </location>
</feature>
<feature type="strand" evidence="8">
    <location>
        <begin position="22"/>
        <end position="27"/>
    </location>
</feature>
<feature type="turn" evidence="8">
    <location>
        <begin position="28"/>
        <end position="30"/>
    </location>
</feature>
<feature type="strand" evidence="8">
    <location>
        <begin position="31"/>
        <end position="36"/>
    </location>
</feature>
<feature type="helix" evidence="8">
    <location>
        <begin position="38"/>
        <end position="46"/>
    </location>
</feature>
<feature type="helix" evidence="8">
    <location>
        <begin position="53"/>
        <end position="59"/>
    </location>
</feature>
<feature type="helix" evidence="8">
    <location>
        <begin position="65"/>
        <end position="77"/>
    </location>
</feature>
<feature type="strand" evidence="8">
    <location>
        <begin position="80"/>
        <end position="83"/>
    </location>
</feature>
<feature type="helix" evidence="8">
    <location>
        <begin position="88"/>
        <end position="101"/>
    </location>
</feature>
<feature type="helix" evidence="8">
    <location>
        <begin position="103"/>
        <end position="105"/>
    </location>
</feature>
<feature type="strand" evidence="8">
    <location>
        <begin position="111"/>
        <end position="115"/>
    </location>
</feature>
<feature type="helix" evidence="8">
    <location>
        <begin position="136"/>
        <end position="143"/>
    </location>
</feature>
<feature type="helix" evidence="8">
    <location>
        <begin position="145"/>
        <end position="147"/>
    </location>
</feature>
<feature type="helix" evidence="8">
    <location>
        <begin position="152"/>
        <end position="168"/>
    </location>
</feature>
<feature type="strand" evidence="8">
    <location>
        <begin position="173"/>
        <end position="181"/>
    </location>
</feature>
<feature type="helix" evidence="8">
    <location>
        <begin position="183"/>
        <end position="186"/>
    </location>
</feature>
<feature type="helix" evidence="8">
    <location>
        <begin position="187"/>
        <end position="196"/>
    </location>
</feature>
<feature type="turn" evidence="8">
    <location>
        <begin position="197"/>
        <end position="199"/>
    </location>
</feature>
<feature type="strand" evidence="8">
    <location>
        <begin position="202"/>
        <end position="211"/>
    </location>
</feature>
<feature type="helix" evidence="8">
    <location>
        <begin position="218"/>
        <end position="226"/>
    </location>
</feature>
<feature type="strand" evidence="8">
    <location>
        <begin position="231"/>
        <end position="234"/>
    </location>
</feature>
<feature type="helix" evidence="8">
    <location>
        <begin position="252"/>
        <end position="264"/>
    </location>
</feature>
<feature type="strand" evidence="8">
    <location>
        <begin position="269"/>
        <end position="276"/>
    </location>
</feature>
<feature type="turn" evidence="8">
    <location>
        <begin position="277"/>
        <end position="279"/>
    </location>
</feature>
<feature type="helix" evidence="8">
    <location>
        <begin position="280"/>
        <end position="282"/>
    </location>
</feature>
<feature type="helix" evidence="8">
    <location>
        <begin position="286"/>
        <end position="293"/>
    </location>
</feature>
<feature type="strand" evidence="8">
    <location>
        <begin position="298"/>
        <end position="303"/>
    </location>
</feature>
<feature type="helix" evidence="8">
    <location>
        <begin position="308"/>
        <end position="312"/>
    </location>
</feature>
<feature type="helix" evidence="8">
    <location>
        <begin position="315"/>
        <end position="331"/>
    </location>
</feature>
<feature type="strand" evidence="8">
    <location>
        <begin position="335"/>
        <end position="338"/>
    </location>
</feature>
<feature type="helix" evidence="8">
    <location>
        <begin position="339"/>
        <end position="348"/>
    </location>
</feature>
<feature type="helix" evidence="8">
    <location>
        <begin position="352"/>
        <end position="355"/>
    </location>
</feature>
<feature type="turn" evidence="8">
    <location>
        <begin position="361"/>
        <end position="365"/>
    </location>
</feature>
<feature type="strand" evidence="8">
    <location>
        <begin position="366"/>
        <end position="369"/>
    </location>
</feature>
<feature type="strand" evidence="8">
    <location>
        <begin position="373"/>
        <end position="377"/>
    </location>
</feature>
<feature type="strand" evidence="8">
    <location>
        <begin position="384"/>
        <end position="387"/>
    </location>
</feature>
<feature type="helix" evidence="8">
    <location>
        <begin position="388"/>
        <end position="390"/>
    </location>
</feature>
<feature type="helix" evidence="8">
    <location>
        <begin position="391"/>
        <end position="396"/>
    </location>
</feature>
<feature type="helix" evidence="8">
    <location>
        <begin position="398"/>
        <end position="404"/>
    </location>
</feature>
<feature type="helix" evidence="8">
    <location>
        <begin position="412"/>
        <end position="414"/>
    </location>
</feature>
<feature type="turn" evidence="8">
    <location>
        <begin position="418"/>
        <end position="422"/>
    </location>
</feature>
<feature type="helix" evidence="8">
    <location>
        <begin position="428"/>
        <end position="435"/>
    </location>
</feature>
<feature type="helix" evidence="8">
    <location>
        <begin position="443"/>
        <end position="459"/>
    </location>
</feature>
<keyword id="KW-0002">3D-structure</keyword>
<keyword id="KW-0004">4Fe-4S</keyword>
<keyword id="KW-0408">Iron</keyword>
<keyword id="KW-0411">Iron-sulfur</keyword>
<keyword id="KW-0456">Lyase</keyword>
<keyword id="KW-0479">Metal-binding</keyword>
<keyword id="KW-1185">Reference proteome</keyword>
<keyword id="KW-0949">S-adenosyl-L-methionine</keyword>
<proteinExistence type="evidence at protein level"/>
<accession>A0A1M6T2I7</accession>
<evidence type="ECO:0000255" key="1">
    <source>
        <dbReference type="PROSITE-ProRule" id="PRU01266"/>
    </source>
</evidence>
<evidence type="ECO:0000269" key="2">
    <source>
    </source>
</evidence>
<evidence type="ECO:0000303" key="3">
    <source>
    </source>
</evidence>
<evidence type="ECO:0000305" key="4"/>
<evidence type="ECO:0000305" key="5">
    <source>
    </source>
</evidence>
<evidence type="ECO:0000312" key="6">
    <source>
        <dbReference type="EMBL" id="SHK51129.1"/>
    </source>
</evidence>
<evidence type="ECO:0007744" key="7">
    <source>
        <dbReference type="PDB" id="8VPO"/>
    </source>
</evidence>
<evidence type="ECO:0007829" key="8">
    <source>
        <dbReference type="PDB" id="8VPO"/>
    </source>
</evidence>
<gene>
    <name evidence="3" type="primary">tigE</name>
    <name evidence="6" type="ORF">SAMN02745912_03532</name>
</gene>